<evidence type="ECO:0000255" key="1">
    <source>
        <dbReference type="PROSITE-ProRule" id="PRU00088"/>
    </source>
</evidence>
<evidence type="ECO:0000305" key="2"/>
<evidence type="ECO:0007829" key="3">
    <source>
        <dbReference type="PDB" id="2FCR"/>
    </source>
</evidence>
<sequence length="173" mass="18871">KIGIFFSTSTGNTTEVADFIGKTLGAKADAPIDVDDVTDPQALKDYDLLFLGAPTWNTGADTERSGTSWDEFLYDKLPEVDMKDLPVAIFGLGDAEGYPDNFCDAIEEIHDCFAKQGAKPVGFSNPDDYDYEESKSVRDGKFLGLPLDMVNDQIPMEKRVAGWVEAVVSETGV</sequence>
<accession>P14070</accession>
<name>FLAV_CHOCR</name>
<keyword id="KW-0002">3D-structure</keyword>
<keyword id="KW-0903">Direct protein sequencing</keyword>
<keyword id="KW-0249">Electron transport</keyword>
<keyword id="KW-0285">Flavoprotein</keyword>
<keyword id="KW-0288">FMN</keyword>
<keyword id="KW-0813">Transport</keyword>
<protein>
    <recommendedName>
        <fullName>Flavodoxin</fullName>
    </recommendedName>
</protein>
<proteinExistence type="evidence at protein level"/>
<comment type="function">
    <text>Low-potential electron donor to a number of redox enzymes.</text>
</comment>
<comment type="cofactor">
    <cofactor>
        <name>FMN</name>
        <dbReference type="ChEBI" id="CHEBI:58210"/>
    </cofactor>
</comment>
<comment type="similarity">
    <text evidence="2">Belongs to the flavodoxin family.</text>
</comment>
<dbReference type="PIR" id="S06648">
    <property type="entry name" value="S06648"/>
</dbReference>
<dbReference type="PDB" id="2FCR">
    <property type="method" value="X-ray"/>
    <property type="resolution" value="1.80 A"/>
    <property type="chains" value="A=1-173"/>
</dbReference>
<dbReference type="PDBsum" id="2FCR"/>
<dbReference type="SMR" id="P14070"/>
<dbReference type="OMA" id="ILGISTW"/>
<dbReference type="EvolutionaryTrace" id="P14070"/>
<dbReference type="GO" id="GO:0009055">
    <property type="term" value="F:electron transfer activity"/>
    <property type="evidence" value="ECO:0007669"/>
    <property type="project" value="InterPro"/>
</dbReference>
<dbReference type="GO" id="GO:0010181">
    <property type="term" value="F:FMN binding"/>
    <property type="evidence" value="ECO:0007669"/>
    <property type="project" value="InterPro"/>
</dbReference>
<dbReference type="Gene3D" id="3.40.50.360">
    <property type="match status" value="1"/>
</dbReference>
<dbReference type="InterPro" id="IPR050619">
    <property type="entry name" value="Flavodoxin"/>
</dbReference>
<dbReference type="InterPro" id="IPR008254">
    <property type="entry name" value="Flavodoxin/NO_synth"/>
</dbReference>
<dbReference type="InterPro" id="IPR001226">
    <property type="entry name" value="Flavodoxin_CS"/>
</dbReference>
<dbReference type="InterPro" id="IPR010086">
    <property type="entry name" value="Flavodoxin_lc"/>
</dbReference>
<dbReference type="InterPro" id="IPR029039">
    <property type="entry name" value="Flavoprotein-like_sf"/>
</dbReference>
<dbReference type="NCBIfam" id="TIGR01752">
    <property type="entry name" value="flav_long"/>
    <property type="match status" value="1"/>
</dbReference>
<dbReference type="NCBIfam" id="NF006738">
    <property type="entry name" value="PRK09267.1-4"/>
    <property type="match status" value="1"/>
</dbReference>
<dbReference type="PANTHER" id="PTHR42809:SF1">
    <property type="entry name" value="FLAVODOXIN 1"/>
    <property type="match status" value="1"/>
</dbReference>
<dbReference type="PANTHER" id="PTHR42809">
    <property type="entry name" value="FLAVODOXIN 2"/>
    <property type="match status" value="1"/>
</dbReference>
<dbReference type="Pfam" id="PF00258">
    <property type="entry name" value="Flavodoxin_1"/>
    <property type="match status" value="1"/>
</dbReference>
<dbReference type="PIRSF" id="PIRSF038996">
    <property type="entry name" value="FldA"/>
    <property type="match status" value="1"/>
</dbReference>
<dbReference type="SUPFAM" id="SSF52218">
    <property type="entry name" value="Flavoproteins"/>
    <property type="match status" value="1"/>
</dbReference>
<dbReference type="PROSITE" id="PS00201">
    <property type="entry name" value="FLAVODOXIN"/>
    <property type="match status" value="1"/>
</dbReference>
<dbReference type="PROSITE" id="PS50902">
    <property type="entry name" value="FLAVODOXIN_LIKE"/>
    <property type="match status" value="1"/>
</dbReference>
<organism>
    <name type="scientific">Chondrus crispus</name>
    <name type="common">Carrageen Irish moss</name>
    <name type="synonym">Polymorpha crispa</name>
    <dbReference type="NCBI Taxonomy" id="2769"/>
    <lineage>
        <taxon>Eukaryota</taxon>
        <taxon>Rhodophyta</taxon>
        <taxon>Florideophyceae</taxon>
        <taxon>Rhodymeniophycidae</taxon>
        <taxon>Gigartinales</taxon>
        <taxon>Gigartinaceae</taxon>
        <taxon>Chondrus</taxon>
    </lineage>
</organism>
<reference key="1">
    <citation type="journal article" date="1989" name="Biochem. J.">
        <title>The amino acid sequence of a flavodoxin from the eukaryotic red alga Chondrus crispus.</title>
        <authorList>
            <person name="Wakabayashi S."/>
            <person name="Kimura K."/>
            <person name="Matsubara H."/>
            <person name="Rogers L.J."/>
        </authorList>
    </citation>
    <scope>PROTEIN SEQUENCE</scope>
</reference>
<reference key="2">
    <citation type="journal article" date="1986" name="Phytochemistry">
        <title>N-terminal amino acid sequences of flavodoxins from Chondrus crispus and Nostoc strain MAC.</title>
        <authorList>
            <person name="Takruri I.A.H."/>
            <person name="Boulter D."/>
            <person name="Fitzgerald M.P."/>
            <person name="Hutber G.N."/>
            <person name="Rogers L.J."/>
        </authorList>
    </citation>
    <scope>PROTEIN SEQUENCE OF 1-34</scope>
</reference>
<reference key="3">
    <citation type="journal article" date="1990" name="J. Biol. Chem.">
        <title>Tertiary structure of oxidized flavodoxin from an eukaryotic red alga Chondrus crispus at 2.35-A resolution. Localization of charged residues and implication for interaction with electron transfer partners.</title>
        <authorList>
            <person name="Fukuyama K."/>
            <person name="Wakabayashi S."/>
            <person name="Matsubara H."/>
            <person name="Rogers L.J."/>
        </authorList>
    </citation>
    <scope>X-RAY CRYSTALLOGRAPHY (2.35 ANGSTROMS)</scope>
</reference>
<reference key="4">
    <citation type="journal article" date="1992" name="J. Mol. Biol.">
        <title>Crystal structure of oxidized flavodoxin from a red alga Chondrus crispus refined at 1.8-A resolution. Description of the flavin mononucleotide binding site.</title>
        <authorList>
            <person name="Fukuyama K."/>
            <person name="Matsubara H."/>
            <person name="Rogers L.J."/>
        </authorList>
    </citation>
    <scope>X-RAY CRYSTALLOGRAPHY (1.8 ANGSTROMS)</scope>
</reference>
<feature type="chain" id="PRO_0000171612" description="Flavodoxin">
    <location>
        <begin position="1"/>
        <end position="173"/>
    </location>
</feature>
<feature type="domain" description="Flavodoxin-like" evidence="1">
    <location>
        <begin position="2"/>
        <end position="168"/>
    </location>
</feature>
<feature type="sequence conflict" description="In Ref. 2; AA sequence." evidence="2" ref="2">
    <original>D</original>
    <variation>S</variation>
    <location>
        <position position="29"/>
    </location>
</feature>
<feature type="sequence conflict" description="In Ref. 2; AA sequence." evidence="2" ref="2">
    <original>D</original>
    <variation>S</variation>
    <location>
        <position position="33"/>
    </location>
</feature>
<feature type="strand" evidence="3">
    <location>
        <begin position="2"/>
        <end position="6"/>
    </location>
</feature>
<feature type="strand" evidence="3">
    <location>
        <begin position="9"/>
        <end position="11"/>
    </location>
</feature>
<feature type="helix" evidence="3">
    <location>
        <begin position="12"/>
        <end position="24"/>
    </location>
</feature>
<feature type="helix" evidence="3">
    <location>
        <begin position="25"/>
        <end position="27"/>
    </location>
</feature>
<feature type="helix" evidence="3">
    <location>
        <begin position="34"/>
        <end position="36"/>
    </location>
</feature>
<feature type="helix" evidence="3">
    <location>
        <begin position="40"/>
        <end position="45"/>
    </location>
</feature>
<feature type="strand" evidence="3">
    <location>
        <begin position="47"/>
        <end position="54"/>
    </location>
</feature>
<feature type="helix" evidence="3">
    <location>
        <begin position="69"/>
        <end position="75"/>
    </location>
</feature>
<feature type="helix" evidence="3">
    <location>
        <begin position="77"/>
        <end position="79"/>
    </location>
</feature>
<feature type="strand" evidence="3">
    <location>
        <begin position="86"/>
        <end position="93"/>
    </location>
</feature>
<feature type="turn" evidence="3">
    <location>
        <begin position="95"/>
        <end position="97"/>
    </location>
</feature>
<feature type="turn" evidence="3">
    <location>
        <begin position="102"/>
        <end position="104"/>
    </location>
</feature>
<feature type="helix" evidence="3">
    <location>
        <begin position="105"/>
        <end position="115"/>
    </location>
</feature>
<feature type="strand" evidence="3">
    <location>
        <begin position="119"/>
        <end position="121"/>
    </location>
</feature>
<feature type="helix" evidence="3">
    <location>
        <begin position="126"/>
        <end position="128"/>
    </location>
</feature>
<feature type="strand" evidence="3">
    <location>
        <begin position="141"/>
        <end position="148"/>
    </location>
</feature>
<feature type="turn" evidence="3">
    <location>
        <begin position="149"/>
        <end position="151"/>
    </location>
</feature>
<feature type="helix" evidence="3">
    <location>
        <begin position="156"/>
        <end position="171"/>
    </location>
</feature>